<sequence>MDQGLSLNTLPLKELRNLIRNNQFTGSTTGCAAGYLQANLVILPAEWATDFLLFCQKNPVACPLIDVTQPGEKYLQSIGRDIDLSTDVPEYHVFYDGEFETAVSDLSTLWREDLVTFVLGCSFSFEEALIQSGLSIRNIDEGKNVSMYDTSIPCQSSGKFSGNYVVSMRPFTSIDAIRAIQITTRFPKAHGAPVHFGDPSLIGINDISTPNYGDAVEIKPNEVPVFWGCGVTPQNVIRQSRPPFCITHAPGKMLITDRLSSEFAVL</sequence>
<reference key="1">
    <citation type="journal article" date="2005" name="Proc. Natl. Acad. Sci. U.S.A.">
        <title>Complete genome sequence of Vibrio fischeri: a symbiotic bacterium with pathogenic congeners.</title>
        <authorList>
            <person name="Ruby E.G."/>
            <person name="Urbanowski M."/>
            <person name="Campbell J."/>
            <person name="Dunn A."/>
            <person name="Faini M."/>
            <person name="Gunsalus R."/>
            <person name="Lostroh P."/>
            <person name="Lupp C."/>
            <person name="McCann J."/>
            <person name="Millikan D."/>
            <person name="Schaefer A."/>
            <person name="Stabb E."/>
            <person name="Stevens A."/>
            <person name="Visick K."/>
            <person name="Whistler C."/>
            <person name="Greenberg E.P."/>
        </authorList>
    </citation>
    <scope>NUCLEOTIDE SEQUENCE [LARGE SCALE GENOMIC DNA]</scope>
    <source>
        <strain>ATCC 700601 / ES114</strain>
    </source>
</reference>
<keyword id="KW-0456">Lyase</keyword>
<keyword id="KW-1185">Reference proteome</keyword>
<name>Y1377_ALIF1</name>
<feature type="chain" id="PRO_0000379873" description="Putative hydro-lyase VF_1377">
    <location>
        <begin position="1"/>
        <end position="266"/>
    </location>
</feature>
<dbReference type="EC" id="4.2.1.-" evidence="1"/>
<dbReference type="EMBL" id="CP000020">
    <property type="protein sequence ID" value="AAW85872.1"/>
    <property type="molecule type" value="Genomic_DNA"/>
</dbReference>
<dbReference type="RefSeq" id="WP_011261969.1">
    <property type="nucleotide sequence ID" value="NC_006840.2"/>
</dbReference>
<dbReference type="RefSeq" id="YP_204760.1">
    <property type="nucleotide sequence ID" value="NC_006840.2"/>
</dbReference>
<dbReference type="SMR" id="Q5E524"/>
<dbReference type="STRING" id="312309.VF_1377"/>
<dbReference type="EnsemblBacteria" id="AAW85872">
    <property type="protein sequence ID" value="AAW85872"/>
    <property type="gene ID" value="VF_1377"/>
</dbReference>
<dbReference type="GeneID" id="54164046"/>
<dbReference type="KEGG" id="vfi:VF_1377"/>
<dbReference type="PATRIC" id="fig|312309.11.peg.1386"/>
<dbReference type="eggNOG" id="COG4336">
    <property type="taxonomic scope" value="Bacteria"/>
</dbReference>
<dbReference type="HOGENOM" id="CLU_059759_0_0_6"/>
<dbReference type="OrthoDB" id="149585at2"/>
<dbReference type="Proteomes" id="UP000000537">
    <property type="component" value="Chromosome I"/>
</dbReference>
<dbReference type="GO" id="GO:0016829">
    <property type="term" value="F:lyase activity"/>
    <property type="evidence" value="ECO:0007669"/>
    <property type="project" value="UniProtKB-KW"/>
</dbReference>
<dbReference type="FunFam" id="3.30.2040.10:FF:000001">
    <property type="entry name" value="D-glutamate cyclase, mitochondrial"/>
    <property type="match status" value="1"/>
</dbReference>
<dbReference type="Gene3D" id="3.40.1640.10">
    <property type="entry name" value="PSTPO5379-like"/>
    <property type="match status" value="1"/>
</dbReference>
<dbReference type="Gene3D" id="3.30.2040.10">
    <property type="entry name" value="PSTPO5379-like domain"/>
    <property type="match status" value="1"/>
</dbReference>
<dbReference type="HAMAP" id="MF_01830">
    <property type="entry name" value="Hydro_lyase"/>
    <property type="match status" value="1"/>
</dbReference>
<dbReference type="InterPro" id="IPR009906">
    <property type="entry name" value="D-Glu_cyclase"/>
</dbReference>
<dbReference type="InterPro" id="IPR038021">
    <property type="entry name" value="Putative_hydro-lyase"/>
</dbReference>
<dbReference type="InterPro" id="IPR016938">
    <property type="entry name" value="UPF0317"/>
</dbReference>
<dbReference type="NCBIfam" id="NF003969">
    <property type="entry name" value="PRK05463.1"/>
    <property type="match status" value="1"/>
</dbReference>
<dbReference type="PANTHER" id="PTHR32022">
    <property type="entry name" value="D-GLUTAMATE CYCLASE, MITOCHONDRIAL"/>
    <property type="match status" value="1"/>
</dbReference>
<dbReference type="PANTHER" id="PTHR32022:SF10">
    <property type="entry name" value="D-GLUTAMATE CYCLASE, MITOCHONDRIAL"/>
    <property type="match status" value="1"/>
</dbReference>
<dbReference type="Pfam" id="PF07286">
    <property type="entry name" value="D-Glu_cyclase"/>
    <property type="match status" value="1"/>
</dbReference>
<dbReference type="PIRSF" id="PIRSF029755">
    <property type="entry name" value="UCP029755"/>
    <property type="match status" value="1"/>
</dbReference>
<dbReference type="SUPFAM" id="SSF160920">
    <property type="entry name" value="PSTPO5379-like"/>
    <property type="match status" value="1"/>
</dbReference>
<organism>
    <name type="scientific">Aliivibrio fischeri (strain ATCC 700601 / ES114)</name>
    <name type="common">Vibrio fischeri</name>
    <dbReference type="NCBI Taxonomy" id="312309"/>
    <lineage>
        <taxon>Bacteria</taxon>
        <taxon>Pseudomonadati</taxon>
        <taxon>Pseudomonadota</taxon>
        <taxon>Gammaproteobacteria</taxon>
        <taxon>Vibrionales</taxon>
        <taxon>Vibrionaceae</taxon>
        <taxon>Aliivibrio</taxon>
    </lineage>
</organism>
<accession>Q5E524</accession>
<evidence type="ECO:0000255" key="1">
    <source>
        <dbReference type="HAMAP-Rule" id="MF_01830"/>
    </source>
</evidence>
<protein>
    <recommendedName>
        <fullName evidence="1">Putative hydro-lyase VF_1377</fullName>
        <ecNumber evidence="1">4.2.1.-</ecNumber>
    </recommendedName>
</protein>
<gene>
    <name type="ordered locus">VF_1377</name>
</gene>
<comment type="similarity">
    <text evidence="1">Belongs to the D-glutamate cyclase family.</text>
</comment>
<proteinExistence type="inferred from homology"/>